<proteinExistence type="inferred from homology"/>
<accession>Q0T0X3</accession>
<dbReference type="EC" id="1.2.1.72" evidence="2"/>
<dbReference type="EMBL" id="CP000266">
    <property type="protein sequence ID" value="ABF05042.1"/>
    <property type="molecule type" value="Genomic_DNA"/>
</dbReference>
<dbReference type="RefSeq" id="WP_000218480.1">
    <property type="nucleotide sequence ID" value="NC_008258.1"/>
</dbReference>
<dbReference type="SMR" id="Q0T0X3"/>
<dbReference type="GeneID" id="93779071"/>
<dbReference type="KEGG" id="sfv:SFV_2973"/>
<dbReference type="HOGENOM" id="CLU_030140_0_2_6"/>
<dbReference type="UniPathway" id="UPA00244">
    <property type="reaction ID" value="UER00309"/>
</dbReference>
<dbReference type="Proteomes" id="UP000000659">
    <property type="component" value="Chromosome"/>
</dbReference>
<dbReference type="GO" id="GO:0005737">
    <property type="term" value="C:cytoplasm"/>
    <property type="evidence" value="ECO:0007669"/>
    <property type="project" value="UniProtKB-SubCell"/>
</dbReference>
<dbReference type="GO" id="GO:0048001">
    <property type="term" value="F:erythrose-4-phosphate dehydrogenase activity"/>
    <property type="evidence" value="ECO:0007669"/>
    <property type="project" value="UniProtKB-UniRule"/>
</dbReference>
<dbReference type="GO" id="GO:0051287">
    <property type="term" value="F:NAD binding"/>
    <property type="evidence" value="ECO:0007669"/>
    <property type="project" value="InterPro"/>
</dbReference>
<dbReference type="GO" id="GO:0042823">
    <property type="term" value="P:pyridoxal phosphate biosynthetic process"/>
    <property type="evidence" value="ECO:0007669"/>
    <property type="project" value="UniProtKB-UniRule"/>
</dbReference>
<dbReference type="GO" id="GO:0008615">
    <property type="term" value="P:pyridoxine biosynthetic process"/>
    <property type="evidence" value="ECO:0007669"/>
    <property type="project" value="UniProtKB-UniRule"/>
</dbReference>
<dbReference type="CDD" id="cd23937">
    <property type="entry name" value="GAPDH_C_E4PDH"/>
    <property type="match status" value="1"/>
</dbReference>
<dbReference type="CDD" id="cd17892">
    <property type="entry name" value="GAPDH_N_E4PDH"/>
    <property type="match status" value="1"/>
</dbReference>
<dbReference type="FunFam" id="3.30.360.10:FF:000007">
    <property type="entry name" value="D-erythrose-4-phosphate dehydrogenase"/>
    <property type="match status" value="1"/>
</dbReference>
<dbReference type="FunFam" id="3.40.50.720:FF:000001">
    <property type="entry name" value="Glyceraldehyde-3-phosphate dehydrogenase"/>
    <property type="match status" value="1"/>
</dbReference>
<dbReference type="Gene3D" id="3.30.360.10">
    <property type="entry name" value="Dihydrodipicolinate Reductase, domain 2"/>
    <property type="match status" value="1"/>
</dbReference>
<dbReference type="Gene3D" id="3.40.50.720">
    <property type="entry name" value="NAD(P)-binding Rossmann-like Domain"/>
    <property type="match status" value="1"/>
</dbReference>
<dbReference type="HAMAP" id="MF_01640">
    <property type="entry name" value="E4P_dehydrog"/>
    <property type="match status" value="1"/>
</dbReference>
<dbReference type="InterPro" id="IPR006422">
    <property type="entry name" value="E4P_DH_bac"/>
</dbReference>
<dbReference type="InterPro" id="IPR020831">
    <property type="entry name" value="GlycerAld/Erythrose_P_DH"/>
</dbReference>
<dbReference type="InterPro" id="IPR020830">
    <property type="entry name" value="GlycerAld_3-P_DH_AS"/>
</dbReference>
<dbReference type="InterPro" id="IPR020829">
    <property type="entry name" value="GlycerAld_3-P_DH_cat"/>
</dbReference>
<dbReference type="InterPro" id="IPR020828">
    <property type="entry name" value="GlycerAld_3-P_DH_NAD(P)-bd"/>
</dbReference>
<dbReference type="InterPro" id="IPR036291">
    <property type="entry name" value="NAD(P)-bd_dom_sf"/>
</dbReference>
<dbReference type="NCBIfam" id="TIGR01532">
    <property type="entry name" value="E4PD_g-proteo"/>
    <property type="match status" value="1"/>
</dbReference>
<dbReference type="NCBIfam" id="NF010058">
    <property type="entry name" value="PRK13535.1"/>
    <property type="match status" value="1"/>
</dbReference>
<dbReference type="PANTHER" id="PTHR43148">
    <property type="entry name" value="GLYCERALDEHYDE-3-PHOSPHATE DEHYDROGENASE 2"/>
    <property type="match status" value="1"/>
</dbReference>
<dbReference type="Pfam" id="PF02800">
    <property type="entry name" value="Gp_dh_C"/>
    <property type="match status" value="1"/>
</dbReference>
<dbReference type="Pfam" id="PF00044">
    <property type="entry name" value="Gp_dh_N"/>
    <property type="match status" value="1"/>
</dbReference>
<dbReference type="PIRSF" id="PIRSF000149">
    <property type="entry name" value="GAP_DH"/>
    <property type="match status" value="1"/>
</dbReference>
<dbReference type="PRINTS" id="PR00078">
    <property type="entry name" value="G3PDHDRGNASE"/>
</dbReference>
<dbReference type="SMART" id="SM00846">
    <property type="entry name" value="Gp_dh_N"/>
    <property type="match status" value="1"/>
</dbReference>
<dbReference type="SUPFAM" id="SSF55347">
    <property type="entry name" value="Glyceraldehyde-3-phosphate dehydrogenase-like, C-terminal domain"/>
    <property type="match status" value="1"/>
</dbReference>
<dbReference type="SUPFAM" id="SSF51735">
    <property type="entry name" value="NAD(P)-binding Rossmann-fold domains"/>
    <property type="match status" value="1"/>
</dbReference>
<dbReference type="PROSITE" id="PS00071">
    <property type="entry name" value="GAPDH"/>
    <property type="match status" value="1"/>
</dbReference>
<organism>
    <name type="scientific">Shigella flexneri serotype 5b (strain 8401)</name>
    <dbReference type="NCBI Taxonomy" id="373384"/>
    <lineage>
        <taxon>Bacteria</taxon>
        <taxon>Pseudomonadati</taxon>
        <taxon>Pseudomonadota</taxon>
        <taxon>Gammaproteobacteria</taxon>
        <taxon>Enterobacterales</taxon>
        <taxon>Enterobacteriaceae</taxon>
        <taxon>Shigella</taxon>
    </lineage>
</organism>
<reference key="1">
    <citation type="journal article" date="2006" name="BMC Genomics">
        <title>Complete genome sequence of Shigella flexneri 5b and comparison with Shigella flexneri 2a.</title>
        <authorList>
            <person name="Nie H."/>
            <person name="Yang F."/>
            <person name="Zhang X."/>
            <person name="Yang J."/>
            <person name="Chen L."/>
            <person name="Wang J."/>
            <person name="Xiong Z."/>
            <person name="Peng J."/>
            <person name="Sun L."/>
            <person name="Dong J."/>
            <person name="Xue Y."/>
            <person name="Xu X."/>
            <person name="Chen S."/>
            <person name="Yao Z."/>
            <person name="Shen Y."/>
            <person name="Jin Q."/>
        </authorList>
    </citation>
    <scope>NUCLEOTIDE SEQUENCE [LARGE SCALE GENOMIC DNA]</scope>
    <source>
        <strain>8401</strain>
    </source>
</reference>
<comment type="function">
    <text evidence="2">Catalyzes the NAD-dependent conversion of D-erythrose 4-phosphate to 4-phosphoerythronate.</text>
</comment>
<comment type="catalytic activity">
    <reaction evidence="2">
        <text>D-erythrose 4-phosphate + NAD(+) + H2O = 4-phospho-D-erythronate + NADH + 2 H(+)</text>
        <dbReference type="Rhea" id="RHEA:12056"/>
        <dbReference type="ChEBI" id="CHEBI:15377"/>
        <dbReference type="ChEBI" id="CHEBI:15378"/>
        <dbReference type="ChEBI" id="CHEBI:16897"/>
        <dbReference type="ChEBI" id="CHEBI:57540"/>
        <dbReference type="ChEBI" id="CHEBI:57945"/>
        <dbReference type="ChEBI" id="CHEBI:58766"/>
        <dbReference type="EC" id="1.2.1.72"/>
    </reaction>
</comment>
<comment type="pathway">
    <text evidence="2">Cofactor biosynthesis; pyridoxine 5'-phosphate biosynthesis; pyridoxine 5'-phosphate from D-erythrose 4-phosphate: step 1/5.</text>
</comment>
<comment type="subunit">
    <text evidence="2">Homotetramer.</text>
</comment>
<comment type="subcellular location">
    <subcellularLocation>
        <location evidence="2">Cytoplasm</location>
    </subcellularLocation>
</comment>
<comment type="similarity">
    <text evidence="2">Belongs to the glyceraldehyde-3-phosphate dehydrogenase family. Epd subfamily.</text>
</comment>
<feature type="initiator methionine" description="Removed" evidence="1">
    <location>
        <position position="1"/>
    </location>
</feature>
<feature type="chain" id="PRO_0000293171" description="D-erythrose-4-phosphate dehydrogenase">
    <location>
        <begin position="2"/>
        <end position="339"/>
    </location>
</feature>
<feature type="active site" description="Nucleophile" evidence="2">
    <location>
        <position position="155"/>
    </location>
</feature>
<feature type="binding site" evidence="2">
    <location>
        <begin position="12"/>
        <end position="13"/>
    </location>
    <ligand>
        <name>NAD(+)</name>
        <dbReference type="ChEBI" id="CHEBI:57540"/>
    </ligand>
</feature>
<feature type="binding site" evidence="2">
    <location>
        <position position="81"/>
    </location>
    <ligand>
        <name>NAD(+)</name>
        <dbReference type="ChEBI" id="CHEBI:57540"/>
    </ligand>
</feature>
<feature type="binding site" evidence="2">
    <location>
        <begin position="154"/>
        <end position="156"/>
    </location>
    <ligand>
        <name>substrate</name>
    </ligand>
</feature>
<feature type="binding site" evidence="2">
    <location>
        <position position="200"/>
    </location>
    <ligand>
        <name>substrate</name>
    </ligand>
</feature>
<feature type="binding site" evidence="2">
    <location>
        <begin position="213"/>
        <end position="214"/>
    </location>
    <ligand>
        <name>substrate</name>
    </ligand>
</feature>
<feature type="binding site" evidence="2">
    <location>
        <position position="236"/>
    </location>
    <ligand>
        <name>substrate</name>
    </ligand>
</feature>
<feature type="binding site" evidence="2">
    <location>
        <position position="318"/>
    </location>
    <ligand>
        <name>NAD(+)</name>
        <dbReference type="ChEBI" id="CHEBI:57540"/>
    </ligand>
</feature>
<feature type="site" description="Activates thiol group during catalysis" evidence="2">
    <location>
        <position position="182"/>
    </location>
</feature>
<protein>
    <recommendedName>
        <fullName evidence="2">D-erythrose-4-phosphate dehydrogenase</fullName>
        <shortName evidence="2">E4PDH</shortName>
        <ecNumber evidence="2">1.2.1.72</ecNumber>
    </recommendedName>
</protein>
<keyword id="KW-0963">Cytoplasm</keyword>
<keyword id="KW-0520">NAD</keyword>
<keyword id="KW-0560">Oxidoreductase</keyword>
<keyword id="KW-0664">Pyridoxine biosynthesis</keyword>
<name>E4PD_SHIF8</name>
<evidence type="ECO:0000250" key="1"/>
<evidence type="ECO:0000255" key="2">
    <source>
        <dbReference type="HAMAP-Rule" id="MF_01640"/>
    </source>
</evidence>
<sequence>MTVRVAINGFGRIGRNVVRALYESGRRAEITVVAINELADAAGMAHLLKYDTSHGRFAWEVRQERDQLFVGDDAIRVLHERSLQSLPWRELGVDVVLDCTGVYGSREHGEAHIAAGAKKVLFSHPGSNDLDATVVYGVNQDQLRAEHRIVSNASCTTNCIIPVIKLLDDAYGIESGTVTTIHSAMHDQQVIDAYHPDLRRTRAASQSIIPVDTKLAAGITRFFPQFNDRFEAIAVRVPTINVTAIDLSVTVKKPVKANEVNLLLQKAAQGAFHGIVDYTELPLVSVDFNHDPHSAIVDGTQTRVSGAHLIKTLVWCDNEWGFANRMLDTTLAMATVAFR</sequence>
<gene>
    <name evidence="2" type="primary">epd</name>
    <name type="ordered locus">SFV_2973</name>
</gene>